<protein>
    <recommendedName>
        <fullName>Caspase-3</fullName>
        <shortName>CASP-3</shortName>
        <ecNumber evidence="4 6 8">3.4.22.56</ecNumber>
    </recommendedName>
    <alternativeName>
        <fullName>Apopain</fullName>
    </alternativeName>
    <alternativeName>
        <fullName evidence="11">Cysteine protease CPP32</fullName>
        <shortName>CPP-32</shortName>
    </alternativeName>
    <alternativeName>
        <fullName>LICE</fullName>
    </alternativeName>
    <alternativeName>
        <fullName>Protein Yama</fullName>
    </alternativeName>
    <alternativeName>
        <fullName>SREBP cleavage activity 1</fullName>
        <shortName>SCA-1</shortName>
    </alternativeName>
    <component>
        <recommendedName>
            <fullName>Caspase-3 subunit p17</fullName>
        </recommendedName>
    </component>
    <component>
        <recommendedName>
            <fullName>Caspase-3 subunit p12</fullName>
        </recommendedName>
    </component>
</protein>
<comment type="function">
    <text evidence="2 3 4 5 6 7 8 9">Thiol protease that acts as a major effector caspase involved in the execution phase of apoptosis (PubMed:16469926, PubMed:8934524). Following cleavage and activation by initiator caspases (CASP8, CASP9 and/or CASP10), mediates execution of apoptosis by catalyzing cleavage of many proteins (PubMed:16469926, PubMed:8934524). At the onset of apoptosis, it proteolytically cleaves poly(ADP-ribose) polymerase PARP1 at a '216-Asp-|-Gly-217' bond. Cleaves and activates sterol regulatory element binding proteins (SREBPs) between the basic helix-loop-helix leucine zipper domain and the membrane attachment domain. Cleaves and activates caspase-6, -7 and -9 (CASP6, CASP7 and CASP9, respectively). Cleaves and inactivates interleukin-18 (IL18) (By similarity). Triggers cell adhesion in sympathetic neurons through RET cleavage (By similarity). Cleaves IL-1 beta between an Asp and an Ala, releasing the mature cytokine which is involved in a variety of inflammatory processes (By similarity). Cleaves and inhibits serine/threonine-protein kinase AKT1 in response to oxidative stress (PubMed:12124386). Acts as an inhibitor of type I interferon production during virus-induced apoptosis by mediating cleavage of antiviral proteins CGAS, IRF3 and MAVS, thereby preventing cytokine overproduction (PubMed:30878284). Also involved in pyroptosis by mediating cleavage and activation of gasdermin-E (GSDME) (By similarity). Cleaves XRCC4 and phospholipid scramblase proteins XKR4, XKR8 and XKR9, leading to promote phosphatidylserine exposure on apoptotic cell surface (PubMed:25231987, PubMed:33725486). Cleaves BIRC6 following inhibition of BIRC6-caspase binding by DIABLO/SMAC (By similarity).</text>
</comment>
<comment type="catalytic activity">
    <reaction evidence="4 6 8">
        <text>Strict requirement for an Asp residue at positions P1 and P4. It has a preferred cleavage sequence of Asp-Xaa-Xaa-Asp-|- with a hydrophobic amino-acid residue at P2 and a hydrophilic amino-acid residue at P3, although Val or Ala are also accepted at this position.</text>
        <dbReference type="EC" id="3.4.22.56"/>
    </reaction>
</comment>
<comment type="activity regulation">
    <text evidence="2">Inhibited by BIRC6; following inhibition of BIRC6-caspase binding by DIABLO/SMAC, BIRC6 is subjected to caspase cleavage, leading to an increase in active caspases.</text>
</comment>
<comment type="subunit">
    <text evidence="2">Heterotetramer that consists of two anti-parallel arranged heterodimers, each one formed by a 17 kDa (p17) and a 12 kDa (p12) subunit. Interacts with BIRC6/bruce.</text>
</comment>
<comment type="interaction">
    <interactant intactId="EBI-1790419">
        <id>P70677</id>
    </interactant>
    <interactant intactId="EBI-5327353">
        <id>P42859</id>
        <label>Htt</label>
    </interactant>
    <organismsDiffer>false</organismsDiffer>
    <experiments>2</experiments>
</comment>
<comment type="interaction">
    <interactant intactId="EBI-1790419">
        <id>P70677</id>
    </interactant>
    <interactant intactId="EBI-642213">
        <id>P11103</id>
        <label>Parp1</label>
    </interactant>
    <organismsDiffer>false</organismsDiffer>
    <experiments>3</experiments>
</comment>
<comment type="interaction">
    <interactant intactId="EBI-1790419">
        <id>P70677</id>
    </interactant>
    <interactant intactId="EBI-352460">
        <id>P62270</id>
        <label>Rps18</label>
    </interactant>
    <organismsDiffer>false</organismsDiffer>
    <experiments>5</experiments>
</comment>
<comment type="interaction">
    <interactant intactId="EBI-1790419">
        <id>P70677</id>
    </interactant>
    <interactant intactId="EBI-1790529">
        <id>Q96EK4</id>
        <label>THAP11</label>
    </interactant>
    <organismsDiffer>true</organismsDiffer>
    <experiments>2</experiments>
</comment>
<comment type="subcellular location">
    <subcellularLocation>
        <location evidence="2">Cytoplasm</location>
    </subcellularLocation>
</comment>
<comment type="tissue specificity">
    <text evidence="10">Highest expression in spleen, lung, liver, kidney and heart (PubMed:9038361). Lower expression in brain, skeletal muscle and testis (PubMed:9038361).</text>
</comment>
<comment type="PTM">
    <text evidence="2">Cleavage by granzyme B, caspase-6, caspase-8 and caspase-10 generates the two active subunits. Additional processing of the propeptides is likely due to the autocatalytic activity of the activated protease. Active heterodimers between the small subunit of caspase-7 protease and the large subunit of caspase-3 also occur and vice versa.</text>
</comment>
<comment type="PTM">
    <text evidence="2">S-nitrosylated on its catalytic site cysteine in unstimulated cell lines and denitrosylated upon activation of the Fas apoptotic pathway, associated with an increase in intracellular caspase activity. Fas therefore activates caspase-3 not only by inducing the cleavage of the caspase zymogen to its active subunits, but also by stimulating the denitrosylation of its active site thiol.</text>
</comment>
<comment type="PTM">
    <text evidence="2">Ubiquitinated by BIRC6; this activity is inhibited by DIABLO/SMAC.</text>
</comment>
<comment type="disruption phenotype">
    <text evidence="5 9">Lethality; the majority of mice on the 129/Svj background die in utero or within weeks of birth because of many extra cells within the brains of these animals (PubMed:8934524). Defects are caused by impaired apoptosis (PubMed:8934524). Mice lacking Casp3 on the C57BL/6J background are viable (PubMed:16469926). Mice lacking Casp3 and Casp7 on the C57BL/6J background die immediately after birth because of defective heart development (PubMed:16469926). This suggests that Casp7 can partially rescue Casp3 in certain conditions (PubMed:16469926).</text>
</comment>
<comment type="similarity">
    <text evidence="12">Belongs to the peptidase C14A family.</text>
</comment>
<evidence type="ECO:0000250" key="1">
    <source>
        <dbReference type="UniProtKB" id="P29466"/>
    </source>
</evidence>
<evidence type="ECO:0000250" key="2">
    <source>
        <dbReference type="UniProtKB" id="P42574"/>
    </source>
</evidence>
<evidence type="ECO:0000250" key="3">
    <source>
        <dbReference type="UniProtKB" id="Q60431"/>
    </source>
</evidence>
<evidence type="ECO:0000269" key="4">
    <source>
    </source>
</evidence>
<evidence type="ECO:0000269" key="5">
    <source>
    </source>
</evidence>
<evidence type="ECO:0000269" key="6">
    <source>
    </source>
</evidence>
<evidence type="ECO:0000269" key="7">
    <source>
    </source>
</evidence>
<evidence type="ECO:0000269" key="8">
    <source>
    </source>
</evidence>
<evidence type="ECO:0000269" key="9">
    <source>
    </source>
</evidence>
<evidence type="ECO:0000269" key="10">
    <source>
    </source>
</evidence>
<evidence type="ECO:0000303" key="11">
    <source>
    </source>
</evidence>
<evidence type="ECO:0000305" key="12"/>
<evidence type="ECO:0007744" key="13">
    <source>
    </source>
</evidence>
<evidence type="ECO:0007744" key="14">
    <source>
    </source>
</evidence>
<evidence type="ECO:0007744" key="15">
    <source>
    </source>
</evidence>
<evidence type="ECO:0007744" key="16">
    <source>
    </source>
</evidence>
<dbReference type="EC" id="3.4.22.56" evidence="4 6 8"/>
<dbReference type="EMBL" id="U54803">
    <property type="protein sequence ID" value="AAC52768.1"/>
    <property type="molecule type" value="Genomic_DNA"/>
</dbReference>
<dbReference type="EMBL" id="U54802">
    <property type="protein sequence ID" value="AAC52768.1"/>
    <property type="status" value="JOINED"/>
    <property type="molecule type" value="Genomic_DNA"/>
</dbReference>
<dbReference type="EMBL" id="U49929">
    <property type="protein sequence ID" value="AAC52764.1"/>
    <property type="molecule type" value="mRNA"/>
</dbReference>
<dbReference type="EMBL" id="D86352">
    <property type="protein sequence ID" value="BAA21727.1"/>
    <property type="molecule type" value="mRNA"/>
</dbReference>
<dbReference type="EMBL" id="Y13086">
    <property type="protein sequence ID" value="CAA73528.1"/>
    <property type="molecule type" value="mRNA"/>
</dbReference>
<dbReference type="EMBL" id="U19522">
    <property type="protein sequence ID" value="AAC53196.1"/>
    <property type="molecule type" value="mRNA"/>
</dbReference>
<dbReference type="EMBL" id="BC038825">
    <property type="protein sequence ID" value="AAH38825.2"/>
    <property type="molecule type" value="mRNA"/>
</dbReference>
<dbReference type="EMBL" id="U63720">
    <property type="protein sequence ID" value="AAD09504.1"/>
    <property type="molecule type" value="mRNA"/>
</dbReference>
<dbReference type="CCDS" id="CCDS22294.1"/>
<dbReference type="PIR" id="JC5410">
    <property type="entry name" value="JC5410"/>
</dbReference>
<dbReference type="RefSeq" id="NP_001271338.1">
    <property type="nucleotide sequence ID" value="NM_001284409.1"/>
</dbReference>
<dbReference type="RefSeq" id="NP_033940.1">
    <property type="nucleotide sequence ID" value="NM_009810.3"/>
</dbReference>
<dbReference type="RefSeq" id="XP_017168032.1">
    <property type="nucleotide sequence ID" value="XM_017312543.3"/>
</dbReference>
<dbReference type="RefSeq" id="XP_030099126.1">
    <property type="nucleotide sequence ID" value="XM_030243266.1"/>
</dbReference>
<dbReference type="SMR" id="P70677"/>
<dbReference type="BioGRID" id="198497">
    <property type="interactions" value="29"/>
</dbReference>
<dbReference type="ComplexPortal" id="CPX-3803">
    <property type="entry name" value="Caspase-3 complex"/>
</dbReference>
<dbReference type="DIP" id="DIP-44076N"/>
<dbReference type="ELM" id="P70677"/>
<dbReference type="FunCoup" id="P70677">
    <property type="interactions" value="2099"/>
</dbReference>
<dbReference type="IntAct" id="P70677">
    <property type="interactions" value="11"/>
</dbReference>
<dbReference type="MINT" id="P70677"/>
<dbReference type="STRING" id="10090.ENSMUSP00000147767"/>
<dbReference type="BindingDB" id="P70677"/>
<dbReference type="ChEMBL" id="CHEMBL5632"/>
<dbReference type="MEROPS" id="C14.003"/>
<dbReference type="GlyGen" id="P70677">
    <property type="glycosylation" value="1 site, 1 O-linked glycan (1 site)"/>
</dbReference>
<dbReference type="iPTMnet" id="P70677"/>
<dbReference type="PhosphoSitePlus" id="P70677"/>
<dbReference type="SwissPalm" id="P70677"/>
<dbReference type="jPOST" id="P70677"/>
<dbReference type="PaxDb" id="10090-ENSMUSP00000091238"/>
<dbReference type="PeptideAtlas" id="P70677"/>
<dbReference type="ProteomicsDB" id="283677"/>
<dbReference type="Pumba" id="P70677"/>
<dbReference type="Antibodypedia" id="1222">
    <property type="antibodies" value="2468 antibodies from 55 providers"/>
</dbReference>
<dbReference type="DNASU" id="12367"/>
<dbReference type="Ensembl" id="ENSMUST00000093517.7">
    <property type="protein sequence ID" value="ENSMUSP00000091238.6"/>
    <property type="gene ID" value="ENSMUSG00000031628.10"/>
</dbReference>
<dbReference type="Ensembl" id="ENSMUST00000211115.2">
    <property type="protein sequence ID" value="ENSMUSP00000147767.2"/>
    <property type="gene ID" value="ENSMUSG00000031628.10"/>
</dbReference>
<dbReference type="GeneID" id="12367"/>
<dbReference type="KEGG" id="mmu:12367"/>
<dbReference type="UCSC" id="uc009lql.2">
    <property type="organism name" value="mouse"/>
</dbReference>
<dbReference type="AGR" id="MGI:107739"/>
<dbReference type="CTD" id="836"/>
<dbReference type="MGI" id="MGI:107739">
    <property type="gene designation" value="Casp3"/>
</dbReference>
<dbReference type="VEuPathDB" id="HostDB:ENSMUSG00000031628"/>
<dbReference type="eggNOG" id="KOG3573">
    <property type="taxonomic scope" value="Eukaryota"/>
</dbReference>
<dbReference type="GeneTree" id="ENSGT00940000153232"/>
<dbReference type="HOGENOM" id="CLU_036904_2_0_1"/>
<dbReference type="InParanoid" id="P70677"/>
<dbReference type="OMA" id="HFTANHC"/>
<dbReference type="OrthoDB" id="6116485at2759"/>
<dbReference type="PhylomeDB" id="P70677"/>
<dbReference type="TreeFam" id="TF102023"/>
<dbReference type="BRENDA" id="3.4.22.56">
    <property type="organism ID" value="3474"/>
</dbReference>
<dbReference type="Reactome" id="R-MMU-111459">
    <property type="pathway name" value="Activation of caspases through apoptosome-mediated cleavage"/>
</dbReference>
<dbReference type="Reactome" id="R-MMU-111465">
    <property type="pathway name" value="Apoptotic cleavage of cellular proteins"/>
</dbReference>
<dbReference type="Reactome" id="R-MMU-111469">
    <property type="pathway name" value="SMAC, XIAP-regulated apoptotic response"/>
</dbReference>
<dbReference type="Reactome" id="R-MMU-140342">
    <property type="pathway name" value="Apoptosis induced DNA fragmentation"/>
</dbReference>
<dbReference type="Reactome" id="R-MMU-2028269">
    <property type="pathway name" value="Signaling by Hippo"/>
</dbReference>
<dbReference type="Reactome" id="R-MMU-205025">
    <property type="pathway name" value="NADE modulates death signalling"/>
</dbReference>
<dbReference type="Reactome" id="R-MMU-264870">
    <property type="pathway name" value="Caspase-mediated cleavage of cytoskeletal proteins"/>
</dbReference>
<dbReference type="Reactome" id="R-MMU-351906">
    <property type="pathway name" value="Apoptotic cleavage of cell adhesion proteins"/>
</dbReference>
<dbReference type="Reactome" id="R-MMU-418889">
    <property type="pathway name" value="Caspase activation via Dependence Receptors in the absence of ligand"/>
</dbReference>
<dbReference type="Reactome" id="R-MMU-449836">
    <property type="pathway name" value="Other interleukin signaling"/>
</dbReference>
<dbReference type="Reactome" id="R-MMU-5620971">
    <property type="pathway name" value="Pyroptosis"/>
</dbReference>
<dbReference type="BioGRID-ORCS" id="12367">
    <property type="hits" value="6 hits in 76 CRISPR screens"/>
</dbReference>
<dbReference type="ChiTaRS" id="Casp3">
    <property type="organism name" value="mouse"/>
</dbReference>
<dbReference type="PRO" id="PR:P70677"/>
<dbReference type="Proteomes" id="UP000000589">
    <property type="component" value="Chromosome 8"/>
</dbReference>
<dbReference type="RNAct" id="P70677">
    <property type="molecule type" value="protein"/>
</dbReference>
<dbReference type="Bgee" id="ENSMUSG00000031628">
    <property type="expression patterns" value="Expressed in cortical plate and 263 other cell types or tissues"/>
</dbReference>
<dbReference type="ExpressionAtlas" id="P70677">
    <property type="expression patterns" value="baseline and differential"/>
</dbReference>
<dbReference type="GO" id="GO:0005737">
    <property type="term" value="C:cytoplasm"/>
    <property type="evidence" value="ECO:0000314"/>
    <property type="project" value="CAFA"/>
</dbReference>
<dbReference type="GO" id="GO:0005829">
    <property type="term" value="C:cytosol"/>
    <property type="evidence" value="ECO:0000304"/>
    <property type="project" value="Reactome"/>
</dbReference>
<dbReference type="GO" id="GO:0031264">
    <property type="term" value="C:death-inducing signaling complex"/>
    <property type="evidence" value="ECO:0007669"/>
    <property type="project" value="Ensembl"/>
</dbReference>
<dbReference type="GO" id="GO:0098978">
    <property type="term" value="C:glutamatergic synapse"/>
    <property type="evidence" value="ECO:0000314"/>
    <property type="project" value="SynGO"/>
</dbReference>
<dbReference type="GO" id="GO:0043025">
    <property type="term" value="C:neuronal cell body"/>
    <property type="evidence" value="ECO:0007669"/>
    <property type="project" value="Ensembl"/>
</dbReference>
<dbReference type="GO" id="GO:0005634">
    <property type="term" value="C:nucleus"/>
    <property type="evidence" value="ECO:0000314"/>
    <property type="project" value="MGI"/>
</dbReference>
<dbReference type="GO" id="GO:0014069">
    <property type="term" value="C:postsynaptic density"/>
    <property type="evidence" value="ECO:0000314"/>
    <property type="project" value="SynGO"/>
</dbReference>
<dbReference type="GO" id="GO:0004190">
    <property type="term" value="F:aspartic-type endopeptidase activity"/>
    <property type="evidence" value="ECO:0000314"/>
    <property type="project" value="MGI"/>
</dbReference>
<dbReference type="GO" id="GO:0004861">
    <property type="term" value="F:cyclin-dependent protein serine/threonine kinase inhibitor activity"/>
    <property type="evidence" value="ECO:0000315"/>
    <property type="project" value="MGI"/>
</dbReference>
<dbReference type="GO" id="GO:0004197">
    <property type="term" value="F:cysteine-type endopeptidase activity"/>
    <property type="evidence" value="ECO:0000314"/>
    <property type="project" value="UniProtKB"/>
</dbReference>
<dbReference type="GO" id="GO:0008234">
    <property type="term" value="F:cysteine-type peptidase activity"/>
    <property type="evidence" value="ECO:0000314"/>
    <property type="project" value="MGI"/>
</dbReference>
<dbReference type="GO" id="GO:0005123">
    <property type="term" value="F:death receptor binding"/>
    <property type="evidence" value="ECO:0007669"/>
    <property type="project" value="Ensembl"/>
</dbReference>
<dbReference type="GO" id="GO:0004175">
    <property type="term" value="F:endopeptidase activity"/>
    <property type="evidence" value="ECO:0000314"/>
    <property type="project" value="UniProtKB"/>
</dbReference>
<dbReference type="GO" id="GO:0008233">
    <property type="term" value="F:peptidase activity"/>
    <property type="evidence" value="ECO:0000314"/>
    <property type="project" value="MGI"/>
</dbReference>
<dbReference type="GO" id="GO:0016005">
    <property type="term" value="F:phospholipase A2 activator activity"/>
    <property type="evidence" value="ECO:0007669"/>
    <property type="project" value="Ensembl"/>
</dbReference>
<dbReference type="GO" id="GO:0002020">
    <property type="term" value="F:protease binding"/>
    <property type="evidence" value="ECO:0007669"/>
    <property type="project" value="Ensembl"/>
</dbReference>
<dbReference type="GO" id="GO:0044877">
    <property type="term" value="F:protein-containing complex binding"/>
    <property type="evidence" value="ECO:0007669"/>
    <property type="project" value="Ensembl"/>
</dbReference>
<dbReference type="GO" id="GO:0061713">
    <property type="term" value="P:anterior neural tube closure"/>
    <property type="evidence" value="ECO:0000315"/>
    <property type="project" value="MGI"/>
</dbReference>
<dbReference type="GO" id="GO:0006915">
    <property type="term" value="P:apoptotic process"/>
    <property type="evidence" value="ECO:0000315"/>
    <property type="project" value="MGI"/>
</dbReference>
<dbReference type="GO" id="GO:0007413">
    <property type="term" value="P:axonal fasciculation"/>
    <property type="evidence" value="ECO:0007669"/>
    <property type="project" value="Ensembl"/>
</dbReference>
<dbReference type="GO" id="GO:0001782">
    <property type="term" value="P:B cell homeostasis"/>
    <property type="evidence" value="ECO:0000315"/>
    <property type="project" value="MGI"/>
</dbReference>
<dbReference type="GO" id="GO:0045165">
    <property type="term" value="P:cell fate commitment"/>
    <property type="evidence" value="ECO:0000315"/>
    <property type="project" value="MGI"/>
</dbReference>
<dbReference type="GO" id="GO:0072734">
    <property type="term" value="P:cellular response to staurosporine"/>
    <property type="evidence" value="ECO:0007669"/>
    <property type="project" value="Ensembl"/>
</dbReference>
<dbReference type="GO" id="GO:0006974">
    <property type="term" value="P:DNA damage response"/>
    <property type="evidence" value="ECO:0000314"/>
    <property type="project" value="MGI"/>
</dbReference>
<dbReference type="GO" id="GO:1904019">
    <property type="term" value="P:epithelial cell apoptotic process"/>
    <property type="evidence" value="ECO:0000314"/>
    <property type="project" value="MGI"/>
</dbReference>
<dbReference type="GO" id="GO:0030218">
    <property type="term" value="P:erythrocyte differentiation"/>
    <property type="evidence" value="ECO:0007669"/>
    <property type="project" value="Ensembl"/>
</dbReference>
<dbReference type="GO" id="GO:0097194">
    <property type="term" value="P:execution phase of apoptosis"/>
    <property type="evidence" value="ECO:0000314"/>
    <property type="project" value="MGI"/>
</dbReference>
<dbReference type="GO" id="GO:0044346">
    <property type="term" value="P:fibroblast apoptotic process"/>
    <property type="evidence" value="ECO:0000314"/>
    <property type="project" value="MGI"/>
</dbReference>
<dbReference type="GO" id="GO:0034349">
    <property type="term" value="P:glial cell apoptotic process"/>
    <property type="evidence" value="ECO:0000315"/>
    <property type="project" value="MGI"/>
</dbReference>
<dbReference type="GO" id="GO:0007507">
    <property type="term" value="P:heart development"/>
    <property type="evidence" value="ECO:0000316"/>
    <property type="project" value="MGI"/>
</dbReference>
<dbReference type="GO" id="GO:0021766">
    <property type="term" value="P:hippocampus development"/>
    <property type="evidence" value="ECO:0007669"/>
    <property type="project" value="Ensembl"/>
</dbReference>
<dbReference type="GO" id="GO:0070059">
    <property type="term" value="P:intrinsic apoptotic signaling pathway in response to endoplasmic reticulum stress"/>
    <property type="evidence" value="ECO:0000303"/>
    <property type="project" value="ParkinsonsUK-UCL"/>
</dbReference>
<dbReference type="GO" id="GO:0008627">
    <property type="term" value="P:intrinsic apoptotic signaling pathway in response to osmotic stress"/>
    <property type="evidence" value="ECO:0000314"/>
    <property type="project" value="CAFA"/>
</dbReference>
<dbReference type="GO" id="GO:0030216">
    <property type="term" value="P:keratinocyte differentiation"/>
    <property type="evidence" value="ECO:0000315"/>
    <property type="project" value="MGI"/>
</dbReference>
<dbReference type="GO" id="GO:0007611">
    <property type="term" value="P:learning or memory"/>
    <property type="evidence" value="ECO:0007669"/>
    <property type="project" value="Ensembl"/>
</dbReference>
<dbReference type="GO" id="GO:0071887">
    <property type="term" value="P:leukocyte apoptotic process"/>
    <property type="evidence" value="ECO:0007669"/>
    <property type="project" value="Ensembl"/>
</dbReference>
<dbReference type="GO" id="GO:0001554">
    <property type="term" value="P:luteolysis"/>
    <property type="evidence" value="ECO:0007669"/>
    <property type="project" value="Ensembl"/>
</dbReference>
<dbReference type="GO" id="GO:0046007">
    <property type="term" value="P:negative regulation of activated T cell proliferation"/>
    <property type="evidence" value="ECO:0000315"/>
    <property type="project" value="MGI"/>
</dbReference>
<dbReference type="GO" id="GO:0043066">
    <property type="term" value="P:negative regulation of apoptotic process"/>
    <property type="evidence" value="ECO:0000266"/>
    <property type="project" value="MGI"/>
</dbReference>
<dbReference type="GO" id="GO:0030889">
    <property type="term" value="P:negative regulation of B cell proliferation"/>
    <property type="evidence" value="ECO:0000315"/>
    <property type="project" value="MGI"/>
</dbReference>
<dbReference type="GO" id="GO:0045786">
    <property type="term" value="P:negative regulation of cell cycle"/>
    <property type="evidence" value="ECO:0000315"/>
    <property type="project" value="MGI"/>
</dbReference>
<dbReference type="GO" id="GO:0001818">
    <property type="term" value="P:negative regulation of cytokine production"/>
    <property type="evidence" value="ECO:0007669"/>
    <property type="project" value="Ensembl"/>
</dbReference>
<dbReference type="GO" id="GO:0051402">
    <property type="term" value="P:neuron apoptotic process"/>
    <property type="evidence" value="ECO:0000314"/>
    <property type="project" value="MGI"/>
</dbReference>
<dbReference type="GO" id="GO:0048011">
    <property type="term" value="P:neurotrophin TRK receptor signaling pathway"/>
    <property type="evidence" value="ECO:0000266"/>
    <property type="project" value="MGI"/>
</dbReference>
<dbReference type="GO" id="GO:1902004">
    <property type="term" value="P:positive regulation of amyloid-beta formation"/>
    <property type="evidence" value="ECO:0000250"/>
    <property type="project" value="UniProtKB"/>
</dbReference>
<dbReference type="GO" id="GO:0043065">
    <property type="term" value="P:positive regulation of apoptotic process"/>
    <property type="evidence" value="ECO:0000314"/>
    <property type="project" value="CAFA"/>
</dbReference>
<dbReference type="GO" id="GO:0043525">
    <property type="term" value="P:positive regulation of neuron apoptotic process"/>
    <property type="evidence" value="ECO:0007669"/>
    <property type="project" value="Ensembl"/>
</dbReference>
<dbReference type="GO" id="GO:0140639">
    <property type="term" value="P:positive regulation of pyroptotic inflammatory response"/>
    <property type="evidence" value="ECO:0007669"/>
    <property type="project" value="Ensembl"/>
</dbReference>
<dbReference type="GO" id="GO:0030163">
    <property type="term" value="P:protein catabolic process"/>
    <property type="evidence" value="ECO:0007669"/>
    <property type="project" value="Ensembl"/>
</dbReference>
<dbReference type="GO" id="GO:0016485">
    <property type="term" value="P:protein processing"/>
    <property type="evidence" value="ECO:0000314"/>
    <property type="project" value="MGI"/>
</dbReference>
<dbReference type="GO" id="GO:0070269">
    <property type="term" value="P:pyroptotic inflammatory response"/>
    <property type="evidence" value="ECO:0007669"/>
    <property type="project" value="Ensembl"/>
</dbReference>
<dbReference type="GO" id="GO:0031647">
    <property type="term" value="P:regulation of protein stability"/>
    <property type="evidence" value="ECO:0000250"/>
    <property type="project" value="UniProtKB"/>
</dbReference>
<dbReference type="GO" id="GO:0098693">
    <property type="term" value="P:regulation of synaptic vesicle cycle"/>
    <property type="evidence" value="ECO:0000314"/>
    <property type="project" value="SynGO"/>
</dbReference>
<dbReference type="GO" id="GO:0043200">
    <property type="term" value="P:response to amino acid"/>
    <property type="evidence" value="ECO:0007669"/>
    <property type="project" value="Ensembl"/>
</dbReference>
<dbReference type="GO" id="GO:0072347">
    <property type="term" value="P:response to anesthetic"/>
    <property type="evidence" value="ECO:0007669"/>
    <property type="project" value="Ensembl"/>
</dbReference>
<dbReference type="GO" id="GO:0032025">
    <property type="term" value="P:response to cobalt ion"/>
    <property type="evidence" value="ECO:0007669"/>
    <property type="project" value="Ensembl"/>
</dbReference>
<dbReference type="GO" id="GO:0032355">
    <property type="term" value="P:response to estradiol"/>
    <property type="evidence" value="ECO:0007669"/>
    <property type="project" value="Ensembl"/>
</dbReference>
<dbReference type="GO" id="GO:0051384">
    <property type="term" value="P:response to glucocorticoid"/>
    <property type="evidence" value="ECO:0007669"/>
    <property type="project" value="Ensembl"/>
</dbReference>
<dbReference type="GO" id="GO:0009749">
    <property type="term" value="P:response to glucose"/>
    <property type="evidence" value="ECO:0007669"/>
    <property type="project" value="Ensembl"/>
</dbReference>
<dbReference type="GO" id="GO:0042542">
    <property type="term" value="P:response to hydrogen peroxide"/>
    <property type="evidence" value="ECO:0007669"/>
    <property type="project" value="Ensembl"/>
</dbReference>
<dbReference type="GO" id="GO:0001666">
    <property type="term" value="P:response to hypoxia"/>
    <property type="evidence" value="ECO:0007669"/>
    <property type="project" value="Ensembl"/>
</dbReference>
<dbReference type="GO" id="GO:0032496">
    <property type="term" value="P:response to lipopolysaccharide"/>
    <property type="evidence" value="ECO:0007669"/>
    <property type="project" value="Ensembl"/>
</dbReference>
<dbReference type="GO" id="GO:0035094">
    <property type="term" value="P:response to nicotine"/>
    <property type="evidence" value="ECO:0007669"/>
    <property type="project" value="Ensembl"/>
</dbReference>
<dbReference type="GO" id="GO:0009411">
    <property type="term" value="P:response to UV"/>
    <property type="evidence" value="ECO:0000314"/>
    <property type="project" value="MGI"/>
</dbReference>
<dbReference type="GO" id="GO:0009611">
    <property type="term" value="P:response to wounding"/>
    <property type="evidence" value="ECO:0000314"/>
    <property type="project" value="MGI"/>
</dbReference>
<dbReference type="GO" id="GO:0010165">
    <property type="term" value="P:response to X-ray"/>
    <property type="evidence" value="ECO:0007669"/>
    <property type="project" value="Ensembl"/>
</dbReference>
<dbReference type="GO" id="GO:0009410">
    <property type="term" value="P:response to xenobiotic stimulus"/>
    <property type="evidence" value="ECO:0007669"/>
    <property type="project" value="Ensembl"/>
</dbReference>
<dbReference type="GO" id="GO:0007605">
    <property type="term" value="P:sensory perception of sound"/>
    <property type="evidence" value="ECO:0000315"/>
    <property type="project" value="MGI"/>
</dbReference>
<dbReference type="GO" id="GO:0051146">
    <property type="term" value="P:striated muscle cell differentiation"/>
    <property type="evidence" value="ECO:0007669"/>
    <property type="project" value="Ensembl"/>
</dbReference>
<dbReference type="GO" id="GO:0043029">
    <property type="term" value="P:T cell homeostasis"/>
    <property type="evidence" value="ECO:0000315"/>
    <property type="project" value="MGI"/>
</dbReference>
<dbReference type="CDD" id="cd00032">
    <property type="entry name" value="CASc"/>
    <property type="match status" value="1"/>
</dbReference>
<dbReference type="FunFam" id="3.30.70.1470:FF:000002">
    <property type="entry name" value="Caspase-3"/>
    <property type="match status" value="1"/>
</dbReference>
<dbReference type="FunFam" id="3.40.50.1460:FF:000001">
    <property type="entry name" value="Caspase-3 preproprotein"/>
    <property type="match status" value="1"/>
</dbReference>
<dbReference type="Gene3D" id="3.40.50.1460">
    <property type="match status" value="1"/>
</dbReference>
<dbReference type="InterPro" id="IPR029030">
    <property type="entry name" value="Caspase-like_dom_sf"/>
</dbReference>
<dbReference type="InterPro" id="IPR033139">
    <property type="entry name" value="Caspase_cys_AS"/>
</dbReference>
<dbReference type="InterPro" id="IPR016129">
    <property type="entry name" value="Caspase_his_AS"/>
</dbReference>
<dbReference type="InterPro" id="IPR002398">
    <property type="entry name" value="Pept_C14"/>
</dbReference>
<dbReference type="InterPro" id="IPR011600">
    <property type="entry name" value="Pept_C14_caspase"/>
</dbReference>
<dbReference type="InterPro" id="IPR002138">
    <property type="entry name" value="Pept_C14_p10"/>
</dbReference>
<dbReference type="InterPro" id="IPR001309">
    <property type="entry name" value="Pept_C14_p20"/>
</dbReference>
<dbReference type="InterPro" id="IPR015917">
    <property type="entry name" value="Pept_C14A"/>
</dbReference>
<dbReference type="PANTHER" id="PTHR10454">
    <property type="entry name" value="CASPASE"/>
    <property type="match status" value="1"/>
</dbReference>
<dbReference type="PANTHER" id="PTHR10454:SF198">
    <property type="entry name" value="CASPASE-3"/>
    <property type="match status" value="1"/>
</dbReference>
<dbReference type="Pfam" id="PF00656">
    <property type="entry name" value="Peptidase_C14"/>
    <property type="match status" value="1"/>
</dbReference>
<dbReference type="PRINTS" id="PR00376">
    <property type="entry name" value="IL1BCENZYME"/>
</dbReference>
<dbReference type="SMART" id="SM00115">
    <property type="entry name" value="CASc"/>
    <property type="match status" value="1"/>
</dbReference>
<dbReference type="SUPFAM" id="SSF52129">
    <property type="entry name" value="Caspase-like"/>
    <property type="match status" value="1"/>
</dbReference>
<dbReference type="PROSITE" id="PS01122">
    <property type="entry name" value="CASPASE_CYS"/>
    <property type="match status" value="1"/>
</dbReference>
<dbReference type="PROSITE" id="PS01121">
    <property type="entry name" value="CASPASE_HIS"/>
    <property type="match status" value="1"/>
</dbReference>
<dbReference type="PROSITE" id="PS50207">
    <property type="entry name" value="CASPASE_P10"/>
    <property type="match status" value="1"/>
</dbReference>
<dbReference type="PROSITE" id="PS50208">
    <property type="entry name" value="CASPASE_P20"/>
    <property type="match status" value="1"/>
</dbReference>
<organism>
    <name type="scientific">Mus musculus</name>
    <name type="common">Mouse</name>
    <dbReference type="NCBI Taxonomy" id="10090"/>
    <lineage>
        <taxon>Eukaryota</taxon>
        <taxon>Metazoa</taxon>
        <taxon>Chordata</taxon>
        <taxon>Craniata</taxon>
        <taxon>Vertebrata</taxon>
        <taxon>Euteleostomi</taxon>
        <taxon>Mammalia</taxon>
        <taxon>Eutheria</taxon>
        <taxon>Euarchontoglires</taxon>
        <taxon>Glires</taxon>
        <taxon>Rodentia</taxon>
        <taxon>Myomorpha</taxon>
        <taxon>Muroidea</taxon>
        <taxon>Muridae</taxon>
        <taxon>Murinae</taxon>
        <taxon>Mus</taxon>
        <taxon>Mus</taxon>
    </lineage>
</organism>
<sequence length="277" mass="31475">MENNKTSVDSKSINNFEVKTIHGSKSVDSGIYLDSSYKMDYPEMGICIIINNKNFHKSTGMSSRSGTDVDAANLRETFMGLKYQVRNKNDLTREDILELMDSVSKEDHSKRSSFVCVILSHGDEGVIYGTNGPVELKKLTSFFRGDYCRSLTGKPKLFIIQACRGTELDCGIETDSGTDEEMACQKIPVEADFLYAYSTAPGYYSWRNSKDGSWFIQSLCSMLKLYAHKLEFMHILTRVNRKVATEFESFSLDSTFHAKKQIPCIVSMLTKELYFYH</sequence>
<keyword id="KW-0007">Acetylation</keyword>
<keyword id="KW-0053">Apoptosis</keyword>
<keyword id="KW-0963">Cytoplasm</keyword>
<keyword id="KW-0378">Hydrolase</keyword>
<keyword id="KW-0597">Phosphoprotein</keyword>
<keyword id="KW-0645">Protease</keyword>
<keyword id="KW-1185">Reference proteome</keyword>
<keyword id="KW-0702">S-nitrosylation</keyword>
<keyword id="KW-0788">Thiol protease</keyword>
<keyword id="KW-0832">Ubl conjugation</keyword>
<keyword id="KW-0865">Zymogen</keyword>
<proteinExistence type="evidence at protein level"/>
<name>CASP3_MOUSE</name>
<accession>P70677</accession>
<accession>O08668</accession>
<accession>Q8CHV5</accession>
<accession>Q9QWI4</accession>
<reference key="1">
    <citation type="journal article" date="1996" name="Oncogene">
        <title>Molecular characterization of mouse and rat CPP32 beta gene encoding a cysteine protease resembling interleukin-1 beta converting enzyme and CED-3.</title>
        <authorList>
            <person name="Juan T.S.-C."/>
            <person name="McNiece I.K."/>
            <person name="Jenkins N.A."/>
            <person name="Gilbert D.J."/>
            <person name="Copeland N.G."/>
            <person name="Fletcher F.A."/>
        </authorList>
    </citation>
    <scope>NUCLEOTIDE SEQUENCE [GENOMIC DNA / MRNA]</scope>
</reference>
<reference key="2">
    <citation type="journal article" date="1997" name="Biochem. Biophys. Res. Commun.">
        <title>Specific expression of CPP32 in sensory neurons of mouse embryos and activation of CPP32 in the apoptosis induced by a withdrawal of NGF.</title>
        <authorList>
            <person name="Mukasa T."/>
            <person name="Urase K."/>
            <person name="Momoi M.Y."/>
            <person name="Kimura I."/>
            <person name="Momoi T."/>
        </authorList>
    </citation>
    <scope>NUCLEOTIDE SEQUENCE [MRNA]</scope>
</reference>
<reference key="3">
    <citation type="journal article" date="1997" name="FEBS Lett.">
        <title>Characterization of seven murine caspase family members.</title>
        <authorList>
            <person name="van de Craen M."/>
            <person name="Vandenabeele P."/>
            <person name="Declercq W."/>
            <person name="van den Brande I."/>
            <person name="van Loo G."/>
            <person name="Molemans F."/>
            <person name="Schotte P."/>
            <person name="van Criekinge W."/>
            <person name="Beyaert R."/>
            <person name="Fiers W."/>
        </authorList>
    </citation>
    <scope>NUCLEOTIDE SEQUENCE [MRNA]</scope>
    <scope>TISSUE SPECIFICITY</scope>
    <source>
        <strain>C3H/An</strain>
    </source>
</reference>
<reference key="4">
    <citation type="submission" date="1997-05" db="EMBL/GenBank/DDBJ databases">
        <authorList>
            <person name="Fernandes-Alnemri T."/>
            <person name="Litwack G."/>
            <person name="Alnemri E.S."/>
        </authorList>
    </citation>
    <scope>NUCLEOTIDE SEQUENCE [MRNA]</scope>
    <source>
        <tissue>Brain</tissue>
    </source>
</reference>
<reference key="5">
    <citation type="journal article" date="2004" name="Genome Res.">
        <title>The status, quality, and expansion of the NIH full-length cDNA project: the Mammalian Gene Collection (MGC).</title>
        <authorList>
            <consortium name="The MGC Project Team"/>
        </authorList>
    </citation>
    <scope>NUCLEOTIDE SEQUENCE [LARGE SCALE MRNA]</scope>
    <source>
        <strain>FVB/N</strain>
        <tissue>Mammary gland</tissue>
    </source>
</reference>
<reference key="6">
    <citation type="submission" date="1996-07" db="EMBL/GenBank/DDBJ databases">
        <title>Multiple pathways of apoptosis converging on the CPP32 protease.</title>
        <authorList>
            <person name="Denis F."/>
            <person name="Alam A."/>
            <person name="Cohen L."/>
            <person name="Hartgers F."/>
            <person name="Braun M."/>
            <person name="Martinez O."/>
            <person name="Fortin J.-P."/>
            <person name="Sekaly R.-P."/>
        </authorList>
    </citation>
    <scope>NUCLEOTIDE SEQUENCE [MRNA] OF 58-277</scope>
</reference>
<reference key="7">
    <citation type="journal article" date="1996" name="Nature">
        <title>Decreased apoptosis in the brain and premature lethality in CPP32-deficient mice.</title>
        <authorList>
            <person name="Kuida K."/>
            <person name="Zheng T.S."/>
            <person name="Na S."/>
            <person name="Kuan C."/>
            <person name="Yang D."/>
            <person name="Karasuyama H."/>
            <person name="Rakic P."/>
            <person name="Flavell R.A."/>
        </authorList>
    </citation>
    <scope>FUNCTION</scope>
    <scope>DISRUPTION PHENOTYPE</scope>
</reference>
<reference key="8">
    <citation type="journal article" date="2002" name="J. Biol. Chem.">
        <title>The role of Asp-462 in regulating Akt activity.</title>
        <authorList>
            <person name="Xu J."/>
            <person name="Liu D."/>
            <person name="Songyang Z."/>
        </authorList>
    </citation>
    <scope>FUNCTION</scope>
    <scope>CATALYTIC ACTIVITY</scope>
</reference>
<reference key="9">
    <citation type="journal article" date="2004" name="Mol. Cell. Proteomics">
        <title>Phosphoproteomic analysis of the developing mouse brain.</title>
        <authorList>
            <person name="Ballif B.A."/>
            <person name="Villen J."/>
            <person name="Beausoleil S.A."/>
            <person name="Schwartz D."/>
            <person name="Gygi S.P."/>
        </authorList>
    </citation>
    <scope>PHOSPHORYLATION [LARGE SCALE ANALYSIS] AT SER-26</scope>
    <scope>IDENTIFICATION BY MASS SPECTROMETRY [LARGE SCALE ANALYSIS]</scope>
    <source>
        <tissue>Embryonic brain</tissue>
    </source>
</reference>
<reference key="10">
    <citation type="journal article" date="2006" name="Science">
        <title>Caspases 3 and 7: key mediators of mitochondrial events of apoptosis.</title>
        <authorList>
            <person name="Lakhani S.A."/>
            <person name="Masud A."/>
            <person name="Kuida K."/>
            <person name="Porter G.A. Jr."/>
            <person name="Booth C.J."/>
            <person name="Mehal W.Z."/>
            <person name="Inayat I."/>
            <person name="Flavell R.A."/>
        </authorList>
    </citation>
    <scope>FUNCTION</scope>
    <scope>DISRUPTION PHENOTYPE</scope>
</reference>
<reference key="11">
    <citation type="journal article" date="2007" name="Proc. Natl. Acad. Sci. U.S.A.">
        <title>Large-scale phosphorylation analysis of mouse liver.</title>
        <authorList>
            <person name="Villen J."/>
            <person name="Beausoleil S.A."/>
            <person name="Gerber S.A."/>
            <person name="Gygi S.P."/>
        </authorList>
    </citation>
    <scope>PHOSPHORYLATION [LARGE SCALE ANALYSIS] AT SER-26</scope>
    <scope>IDENTIFICATION BY MASS SPECTROMETRY [LARGE SCALE ANALYSIS]</scope>
    <source>
        <tissue>Liver</tissue>
    </source>
</reference>
<reference key="12">
    <citation type="journal article" date="2010" name="Cell">
        <title>A tissue-specific atlas of mouse protein phosphorylation and expression.</title>
        <authorList>
            <person name="Huttlin E.L."/>
            <person name="Jedrychowski M.P."/>
            <person name="Elias J.E."/>
            <person name="Goswami T."/>
            <person name="Rad R."/>
            <person name="Beausoleil S.A."/>
            <person name="Villen J."/>
            <person name="Haas W."/>
            <person name="Sowa M.E."/>
            <person name="Gygi S.P."/>
        </authorList>
    </citation>
    <scope>PHOSPHORYLATION [LARGE SCALE ANALYSIS] AT SER-26</scope>
    <scope>IDENTIFICATION BY MASS SPECTROMETRY [LARGE SCALE ANALYSIS]</scope>
    <source>
        <tissue>Brain</tissue>
        <tissue>Brown adipose tissue</tissue>
        <tissue>Heart</tissue>
        <tissue>Kidney</tissue>
        <tissue>Liver</tissue>
        <tissue>Lung</tissue>
        <tissue>Spleen</tissue>
        <tissue>Testis</tissue>
    </source>
</reference>
<reference key="13">
    <citation type="journal article" date="2013" name="Mol. Cell">
        <title>SIRT5-mediated lysine desuccinylation impacts diverse metabolic pathways.</title>
        <authorList>
            <person name="Park J."/>
            <person name="Chen Y."/>
            <person name="Tishkoff D.X."/>
            <person name="Peng C."/>
            <person name="Tan M."/>
            <person name="Dai L."/>
            <person name="Xie Z."/>
            <person name="Zhang Y."/>
            <person name="Zwaans B.M."/>
            <person name="Skinner M.E."/>
            <person name="Lombard D.B."/>
            <person name="Zhao Y."/>
        </authorList>
    </citation>
    <scope>ACETYLATION [LARGE SCALE ANALYSIS] AT LYS-11</scope>
    <scope>IDENTIFICATION BY MASS SPECTROMETRY [LARGE SCALE ANALYSIS]</scope>
    <source>
        <tissue>Embryonic fibroblast</tissue>
    </source>
</reference>
<reference key="14">
    <citation type="journal article" date="2014" name="J. Biol. Chem.">
        <title>Exposure of phosphatidylserine by Xk-related protein family members during apoptosis.</title>
        <authorList>
            <person name="Suzuki J."/>
            <person name="Imanishi E."/>
            <person name="Nagata S."/>
        </authorList>
    </citation>
    <scope>FUNCTION</scope>
    <scope>CATALYTIC ACTIVITY</scope>
</reference>
<reference key="15">
    <citation type="journal article" date="2019" name="Mol. Cell">
        <title>Apoptotic caspases suppress type i interferon production via the cleavage of cGAS, MAVS, and IRF3.</title>
        <authorList>
            <person name="Ning X."/>
            <person name="Wang Y."/>
            <person name="Jing M."/>
            <person name="Sha M."/>
            <person name="Lv M."/>
            <person name="Gao P."/>
            <person name="Zhang R."/>
            <person name="Huang X."/>
            <person name="Feng J.M."/>
            <person name="Jiang Z."/>
        </authorList>
    </citation>
    <scope>FUNCTION</scope>
</reference>
<reference key="16">
    <citation type="journal article" date="2021" name="Mol. Cell">
        <title>Caspase cleavage releases a nuclear protein fragment that stimulates phospholipid scrambling at the plasma membrane.</title>
        <authorList>
            <person name="Maruoka M."/>
            <person name="Zhang P."/>
            <person name="Mori H."/>
            <person name="Imanishi E."/>
            <person name="Packwood D.M."/>
            <person name="Harada H."/>
            <person name="Kosako H."/>
            <person name="Suzuki J."/>
        </authorList>
    </citation>
    <scope>FUNCTION</scope>
    <scope>CATALYTIC ACTIVITY</scope>
</reference>
<feature type="propeptide" id="PRO_0000004573" evidence="2">
    <location>
        <begin position="1"/>
        <end position="9"/>
    </location>
</feature>
<feature type="propeptide" id="PRO_0000004574" evidence="2">
    <location>
        <begin position="10"/>
        <end position="28"/>
    </location>
</feature>
<feature type="chain" id="PRO_0000004575" description="Caspase-3 subunit p17" evidence="2">
    <location>
        <begin position="29"/>
        <end position="175"/>
    </location>
</feature>
<feature type="chain" id="PRO_0000004576" description="Caspase-3 subunit p12" evidence="2">
    <location>
        <begin position="176"/>
        <end position="277"/>
    </location>
</feature>
<feature type="active site" evidence="1">
    <location>
        <position position="121"/>
    </location>
</feature>
<feature type="active site" evidence="1">
    <location>
        <position position="163"/>
    </location>
</feature>
<feature type="modified residue" description="N-acetylmethionine" evidence="2">
    <location>
        <position position="1"/>
    </location>
</feature>
<feature type="modified residue" description="N6-acetyllysine" evidence="16">
    <location>
        <position position="11"/>
    </location>
</feature>
<feature type="modified residue" description="Phosphoserine" evidence="13 14 15">
    <location>
        <position position="26"/>
    </location>
</feature>
<feature type="modified residue" description="S-nitrosocysteine; in inhibited form" evidence="2">
    <location>
        <position position="163"/>
    </location>
</feature>
<feature type="sequence conflict" description="In Ref. 6; AAD09504." evidence="12" ref="6">
    <original>SRS</original>
    <variation>ARN</variation>
    <location>
        <begin position="63"/>
        <end position="65"/>
    </location>
</feature>
<feature type="sequence conflict" description="In Ref. 6; AAD09504." evidence="12" ref="6">
    <original>E</original>
    <variation>Q</variation>
    <location>
        <position position="231"/>
    </location>
</feature>
<feature type="sequence conflict" description="In Ref. 6; AAD09504." evidence="12" ref="6">
    <original>I</original>
    <variation>F</variation>
    <location>
        <position position="262"/>
    </location>
</feature>
<gene>
    <name type="primary">Casp3</name>
    <name evidence="11" type="synonym">Cpp32</name>
</gene>